<reference key="1">
    <citation type="journal article" date="2008" name="J. Bacteriol.">
        <title>Genome sequence of a nephritogenic and highly transformable M49 strain of Streptococcus pyogenes.</title>
        <authorList>
            <person name="McShan W.M."/>
            <person name="Ferretti J.J."/>
            <person name="Karasawa T."/>
            <person name="Suvorov A.N."/>
            <person name="Lin S."/>
            <person name="Qin B."/>
            <person name="Jia H."/>
            <person name="Kenton S."/>
            <person name="Najar F."/>
            <person name="Wu H."/>
            <person name="Scott J."/>
            <person name="Roe B.A."/>
            <person name="Savic D.J."/>
        </authorList>
    </citation>
    <scope>NUCLEOTIDE SEQUENCE [LARGE SCALE GENOMIC DNA]</scope>
    <source>
        <strain>NZ131</strain>
    </source>
</reference>
<keyword id="KW-0479">Metal-binding</keyword>
<keyword id="KW-0687">Ribonucleoprotein</keyword>
<keyword id="KW-0689">Ribosomal protein</keyword>
<keyword id="KW-0694">RNA-binding</keyword>
<keyword id="KW-0699">rRNA-binding</keyword>
<keyword id="KW-0862">Zinc</keyword>
<dbReference type="EMBL" id="CP000829">
    <property type="protein sequence ID" value="ACI60417.1"/>
    <property type="molecule type" value="Genomic_DNA"/>
</dbReference>
<dbReference type="SMR" id="B5XJ49"/>
<dbReference type="KEGG" id="soz:Spy49_0060"/>
<dbReference type="HOGENOM" id="CLU_139869_3_0_9"/>
<dbReference type="Proteomes" id="UP000001039">
    <property type="component" value="Chromosome"/>
</dbReference>
<dbReference type="GO" id="GO:0015935">
    <property type="term" value="C:small ribosomal subunit"/>
    <property type="evidence" value="ECO:0007669"/>
    <property type="project" value="TreeGrafter"/>
</dbReference>
<dbReference type="GO" id="GO:0019843">
    <property type="term" value="F:rRNA binding"/>
    <property type="evidence" value="ECO:0007669"/>
    <property type="project" value="UniProtKB-UniRule"/>
</dbReference>
<dbReference type="GO" id="GO:0003735">
    <property type="term" value="F:structural constituent of ribosome"/>
    <property type="evidence" value="ECO:0007669"/>
    <property type="project" value="InterPro"/>
</dbReference>
<dbReference type="GO" id="GO:0008270">
    <property type="term" value="F:zinc ion binding"/>
    <property type="evidence" value="ECO:0007669"/>
    <property type="project" value="UniProtKB-UniRule"/>
</dbReference>
<dbReference type="GO" id="GO:0006412">
    <property type="term" value="P:translation"/>
    <property type="evidence" value="ECO:0007669"/>
    <property type="project" value="UniProtKB-UniRule"/>
</dbReference>
<dbReference type="FunFam" id="4.10.830.10:FF:000001">
    <property type="entry name" value="30S ribosomal protein S14 type Z"/>
    <property type="match status" value="1"/>
</dbReference>
<dbReference type="Gene3D" id="4.10.830.10">
    <property type="entry name" value="30s Ribosomal Protein S14, Chain N"/>
    <property type="match status" value="1"/>
</dbReference>
<dbReference type="HAMAP" id="MF_01364_B">
    <property type="entry name" value="Ribosomal_uS14_2_B"/>
    <property type="match status" value="1"/>
</dbReference>
<dbReference type="InterPro" id="IPR001209">
    <property type="entry name" value="Ribosomal_uS14"/>
</dbReference>
<dbReference type="InterPro" id="IPR023053">
    <property type="entry name" value="Ribosomal_uS14_bact"/>
</dbReference>
<dbReference type="InterPro" id="IPR018271">
    <property type="entry name" value="Ribosomal_uS14_CS"/>
</dbReference>
<dbReference type="InterPro" id="IPR043140">
    <property type="entry name" value="Ribosomal_uS14_sf"/>
</dbReference>
<dbReference type="NCBIfam" id="NF005974">
    <property type="entry name" value="PRK08061.1"/>
    <property type="match status" value="1"/>
</dbReference>
<dbReference type="PANTHER" id="PTHR19836">
    <property type="entry name" value="30S RIBOSOMAL PROTEIN S14"/>
    <property type="match status" value="1"/>
</dbReference>
<dbReference type="PANTHER" id="PTHR19836:SF26">
    <property type="entry name" value="SMALL RIBOSOMAL SUBUNIT PROTEIN US14B"/>
    <property type="match status" value="1"/>
</dbReference>
<dbReference type="Pfam" id="PF00253">
    <property type="entry name" value="Ribosomal_S14"/>
    <property type="match status" value="1"/>
</dbReference>
<dbReference type="SUPFAM" id="SSF57716">
    <property type="entry name" value="Glucocorticoid receptor-like (DNA-binding domain)"/>
    <property type="match status" value="1"/>
</dbReference>
<dbReference type="PROSITE" id="PS00527">
    <property type="entry name" value="RIBOSOMAL_S14"/>
    <property type="match status" value="1"/>
</dbReference>
<gene>
    <name evidence="1" type="primary">rpsZ</name>
    <name evidence="1" type="synonym">rpsN</name>
    <name type="ordered locus">Spy49_0060</name>
</gene>
<organism>
    <name type="scientific">Streptococcus pyogenes serotype M49 (strain NZ131)</name>
    <dbReference type="NCBI Taxonomy" id="471876"/>
    <lineage>
        <taxon>Bacteria</taxon>
        <taxon>Bacillati</taxon>
        <taxon>Bacillota</taxon>
        <taxon>Bacilli</taxon>
        <taxon>Lactobacillales</taxon>
        <taxon>Streptococcaceae</taxon>
        <taxon>Streptococcus</taxon>
    </lineage>
</organism>
<feature type="chain" id="PRO_1000143920" description="Small ribosomal subunit protein uS14">
    <location>
        <begin position="1"/>
        <end position="61"/>
    </location>
</feature>
<feature type="binding site" evidence="1">
    <location>
        <position position="24"/>
    </location>
    <ligand>
        <name>Zn(2+)</name>
        <dbReference type="ChEBI" id="CHEBI:29105"/>
    </ligand>
</feature>
<feature type="binding site" evidence="1">
    <location>
        <position position="27"/>
    </location>
    <ligand>
        <name>Zn(2+)</name>
        <dbReference type="ChEBI" id="CHEBI:29105"/>
    </ligand>
</feature>
<feature type="binding site" evidence="1">
    <location>
        <position position="40"/>
    </location>
    <ligand>
        <name>Zn(2+)</name>
        <dbReference type="ChEBI" id="CHEBI:29105"/>
    </ligand>
</feature>
<feature type="binding site" evidence="1">
    <location>
        <position position="43"/>
    </location>
    <ligand>
        <name>Zn(2+)</name>
        <dbReference type="ChEBI" id="CHEBI:29105"/>
    </ligand>
</feature>
<evidence type="ECO:0000255" key="1">
    <source>
        <dbReference type="HAMAP-Rule" id="MF_01364"/>
    </source>
</evidence>
<evidence type="ECO:0000305" key="2"/>
<comment type="function">
    <text evidence="1">Binds 16S rRNA, required for the assembly of 30S particles and may also be responsible for determining the conformation of the 16S rRNA at the A site.</text>
</comment>
<comment type="cofactor">
    <cofactor evidence="1">
        <name>Zn(2+)</name>
        <dbReference type="ChEBI" id="CHEBI:29105"/>
    </cofactor>
    <text evidence="1">Binds 1 zinc ion per subunit.</text>
</comment>
<comment type="subunit">
    <text evidence="1">Part of the 30S ribosomal subunit. Contacts proteins S3 and S10.</text>
</comment>
<comment type="similarity">
    <text evidence="1">Belongs to the universal ribosomal protein uS14 family. Zinc-binding uS14 subfamily.</text>
</comment>
<proteinExistence type="inferred from homology"/>
<name>RS14Z_STRPZ</name>
<sequence length="61" mass="6997">MAKKSMIAKNKRPAKHSTQAYTRCEKCGRPHSVSRKFKLCRVCFRELAYKGQIPGVVKASW</sequence>
<protein>
    <recommendedName>
        <fullName evidence="1">Small ribosomal subunit protein uS14</fullName>
    </recommendedName>
    <alternativeName>
        <fullName evidence="2">30S ribosomal protein S14 type Z</fullName>
    </alternativeName>
</protein>
<accession>B5XJ49</accession>